<evidence type="ECO:0000255" key="1"/>
<evidence type="ECO:0000305" key="2"/>
<organism>
    <name type="scientific">Escherichia coli (strain K12)</name>
    <dbReference type="NCBI Taxonomy" id="83333"/>
    <lineage>
        <taxon>Bacteria</taxon>
        <taxon>Pseudomonadati</taxon>
        <taxon>Pseudomonadota</taxon>
        <taxon>Gammaproteobacteria</taxon>
        <taxon>Enterobacterales</taxon>
        <taxon>Enterobacteriaceae</taxon>
        <taxon>Escherichia</taxon>
    </lineage>
</organism>
<comment type="function">
    <text>Could be involved in pseudouridine transport.</text>
</comment>
<comment type="subcellular location">
    <subcellularLocation>
        <location>Cell inner membrane</location>
        <topology>Multi-pass membrane protein</topology>
    </subcellularLocation>
</comment>
<comment type="similarity">
    <text evidence="2">Belongs to the concentrative nucleoside transporter (CNT) (TC 2.A.41) family.</text>
</comment>
<proteinExistence type="evidence at protein level"/>
<sequence length="416" mass="43432">MDIMRSVVGMVVLLAIAFLLSVNKKSISLRTVGAALLLQIAIGGIMLYFPPGKWAVEQAALGVHKVMSYSDAGSAFIFGSLVGPKMDVLFDGAGFIFAFRVLPAIIFVTALISLLYYIGVMGLLIRILGSIFQKALNISKIESFVAVTTIFLGQNEIPAIVKPFIDRMNRNELFTAICSGMASIAGSMMIGYAGMGVPIDYLLAASLMAIPGGILFARILSPATEPSQVTFENLSFSETPPKSFIEAAASGAMTGLKIAAGVATVVMAFVAIIALINGIIGGIGGWFGFANASLESIFGYVLAPLAWIMGVDWSDANLAGSLIGQKLAINEFVAYLSFSPYLQTGGTLEVKTIAIISFALCGFANFGSIGVVVGAFSAISPKRAPEIAQLGLRALAAATLSNLMSATIAGFFIGLA</sequence>
<accession>P33024</accession>
<accession>Q2MAR5</accession>
<dbReference type="EMBL" id="U00007">
    <property type="protein sequence ID" value="AAA60518.1"/>
    <property type="molecule type" value="Genomic_DNA"/>
</dbReference>
<dbReference type="EMBL" id="U00096">
    <property type="protein sequence ID" value="AAC75225.1"/>
    <property type="molecule type" value="Genomic_DNA"/>
</dbReference>
<dbReference type="EMBL" id="AP009048">
    <property type="protein sequence ID" value="BAE76641.1"/>
    <property type="molecule type" value="Genomic_DNA"/>
</dbReference>
<dbReference type="PIR" id="C64985">
    <property type="entry name" value="C64985"/>
</dbReference>
<dbReference type="RefSeq" id="NP_416669.1">
    <property type="nucleotide sequence ID" value="NC_000913.3"/>
</dbReference>
<dbReference type="RefSeq" id="WP_000353878.1">
    <property type="nucleotide sequence ID" value="NZ_SSZK01000027.1"/>
</dbReference>
<dbReference type="SMR" id="P33024"/>
<dbReference type="BioGRID" id="4260636">
    <property type="interactions" value="134"/>
</dbReference>
<dbReference type="DIP" id="DIP-11925N"/>
<dbReference type="FunCoup" id="P33024">
    <property type="interactions" value="389"/>
</dbReference>
<dbReference type="IntAct" id="P33024">
    <property type="interactions" value="2"/>
</dbReference>
<dbReference type="STRING" id="511145.b2164"/>
<dbReference type="TCDB" id="2.A.41.2.9">
    <property type="family name" value="the concentrative nucleoside transporter (cnt) family"/>
</dbReference>
<dbReference type="PaxDb" id="511145-b2164"/>
<dbReference type="EnsemblBacteria" id="AAC75225">
    <property type="protein sequence ID" value="AAC75225"/>
    <property type="gene ID" value="b2164"/>
</dbReference>
<dbReference type="GeneID" id="946671"/>
<dbReference type="KEGG" id="ecj:JW2151"/>
<dbReference type="KEGG" id="eco:b2164"/>
<dbReference type="KEGG" id="ecoc:C3026_12125"/>
<dbReference type="PATRIC" id="fig|1411691.4.peg.75"/>
<dbReference type="EchoBASE" id="EB1967"/>
<dbReference type="eggNOG" id="COG1972">
    <property type="taxonomic scope" value="Bacteria"/>
</dbReference>
<dbReference type="HOGENOM" id="CLU_016813_4_2_6"/>
<dbReference type="InParanoid" id="P33024"/>
<dbReference type="OMA" id="IMLYAMC"/>
<dbReference type="OrthoDB" id="9766455at2"/>
<dbReference type="PhylomeDB" id="P33024"/>
<dbReference type="BioCyc" id="EcoCyc:YEIM-MONOMER"/>
<dbReference type="PRO" id="PR:P33024"/>
<dbReference type="Proteomes" id="UP000000625">
    <property type="component" value="Chromosome"/>
</dbReference>
<dbReference type="GO" id="GO:0005886">
    <property type="term" value="C:plasma membrane"/>
    <property type="evidence" value="ECO:0000314"/>
    <property type="project" value="EcoCyc"/>
</dbReference>
<dbReference type="GO" id="GO:0005337">
    <property type="term" value="F:nucleoside transmembrane transporter activity"/>
    <property type="evidence" value="ECO:0000318"/>
    <property type="project" value="GO_Central"/>
</dbReference>
<dbReference type="GO" id="GO:0015293">
    <property type="term" value="F:symporter activity"/>
    <property type="evidence" value="ECO:0000318"/>
    <property type="project" value="GO_Central"/>
</dbReference>
<dbReference type="GO" id="GO:1901642">
    <property type="term" value="P:nucleoside transmembrane transport"/>
    <property type="evidence" value="ECO:0000318"/>
    <property type="project" value="GO_Central"/>
</dbReference>
<dbReference type="InterPro" id="IPR008276">
    <property type="entry name" value="C_nuclsd_transpt"/>
</dbReference>
<dbReference type="InterPro" id="IPR018270">
    <property type="entry name" value="C_nuclsd_transpt_met_bac"/>
</dbReference>
<dbReference type="InterPro" id="IPR011657">
    <property type="entry name" value="CNT_C_dom"/>
</dbReference>
<dbReference type="InterPro" id="IPR002668">
    <property type="entry name" value="CNT_N_dom"/>
</dbReference>
<dbReference type="InterPro" id="IPR011642">
    <property type="entry name" value="Gate_dom"/>
</dbReference>
<dbReference type="NCBIfam" id="TIGR00804">
    <property type="entry name" value="nupC"/>
    <property type="match status" value="1"/>
</dbReference>
<dbReference type="PANTHER" id="PTHR10590">
    <property type="entry name" value="SODIUM/NUCLEOSIDE COTRANSPORTER"/>
    <property type="match status" value="1"/>
</dbReference>
<dbReference type="PANTHER" id="PTHR10590:SF4">
    <property type="entry name" value="SOLUTE CARRIER FAMILY 28 MEMBER 3"/>
    <property type="match status" value="1"/>
</dbReference>
<dbReference type="Pfam" id="PF07670">
    <property type="entry name" value="Gate"/>
    <property type="match status" value="1"/>
</dbReference>
<dbReference type="Pfam" id="PF07662">
    <property type="entry name" value="Nucleos_tra2_C"/>
    <property type="match status" value="1"/>
</dbReference>
<dbReference type="Pfam" id="PF01773">
    <property type="entry name" value="Nucleos_tra2_N"/>
    <property type="match status" value="1"/>
</dbReference>
<gene>
    <name type="primary">psuT</name>
    <name type="synonym">pscT</name>
    <name type="synonym">yeiM</name>
    <name type="ordered locus">b2164</name>
    <name type="ordered locus">JW2151</name>
</gene>
<name>PSUT_ECOLI</name>
<protein>
    <recommendedName>
        <fullName>Putative pseudouridine transporter</fullName>
    </recommendedName>
</protein>
<reference key="1">
    <citation type="submission" date="1993-10" db="EMBL/GenBank/DDBJ databases">
        <title>Automated multiplex sequencing of the E.coli genome.</title>
        <authorList>
            <person name="Richterich P."/>
            <person name="Lakey N."/>
            <person name="Gryan G."/>
            <person name="Jaehn L."/>
            <person name="Mintz L."/>
            <person name="Robison K."/>
            <person name="Church G.M."/>
        </authorList>
    </citation>
    <scope>NUCLEOTIDE SEQUENCE [LARGE SCALE GENOMIC DNA]</scope>
    <source>
        <strain>K12 / BHB2600</strain>
    </source>
</reference>
<reference key="2">
    <citation type="journal article" date="1997" name="Science">
        <title>The complete genome sequence of Escherichia coli K-12.</title>
        <authorList>
            <person name="Blattner F.R."/>
            <person name="Plunkett G. III"/>
            <person name="Bloch C.A."/>
            <person name="Perna N.T."/>
            <person name="Burland V."/>
            <person name="Riley M."/>
            <person name="Collado-Vides J."/>
            <person name="Glasner J.D."/>
            <person name="Rode C.K."/>
            <person name="Mayhew G.F."/>
            <person name="Gregor J."/>
            <person name="Davis N.W."/>
            <person name="Kirkpatrick H.A."/>
            <person name="Goeden M.A."/>
            <person name="Rose D.J."/>
            <person name="Mau B."/>
            <person name="Shao Y."/>
        </authorList>
    </citation>
    <scope>NUCLEOTIDE SEQUENCE [LARGE SCALE GENOMIC DNA]</scope>
    <source>
        <strain>K12 / MG1655 / ATCC 47076</strain>
    </source>
</reference>
<reference key="3">
    <citation type="journal article" date="2006" name="Mol. Syst. Biol.">
        <title>Highly accurate genome sequences of Escherichia coli K-12 strains MG1655 and W3110.</title>
        <authorList>
            <person name="Hayashi K."/>
            <person name="Morooka N."/>
            <person name="Yamamoto Y."/>
            <person name="Fujita K."/>
            <person name="Isono K."/>
            <person name="Choi S."/>
            <person name="Ohtsubo E."/>
            <person name="Baba T."/>
            <person name="Wanner B.L."/>
            <person name="Mori H."/>
            <person name="Horiuchi T."/>
        </authorList>
    </citation>
    <scope>NUCLEOTIDE SEQUENCE [LARGE SCALE GENOMIC DNA]</scope>
    <source>
        <strain>K12 / W3110 / ATCC 27325 / DSM 5911</strain>
    </source>
</reference>
<reference key="4">
    <citation type="journal article" date="2005" name="Science">
        <title>Global topology analysis of the Escherichia coli inner membrane proteome.</title>
        <authorList>
            <person name="Daley D.O."/>
            <person name="Rapp M."/>
            <person name="Granseth E."/>
            <person name="Melen K."/>
            <person name="Drew D."/>
            <person name="von Heijne G."/>
        </authorList>
    </citation>
    <scope>TOPOLOGY [LARGE SCALE ANALYSIS]</scope>
    <source>
        <strain>K12 / MG1655 / ATCC 47076</strain>
    </source>
</reference>
<keyword id="KW-0997">Cell inner membrane</keyword>
<keyword id="KW-1003">Cell membrane</keyword>
<keyword id="KW-0472">Membrane</keyword>
<keyword id="KW-1185">Reference proteome</keyword>
<keyword id="KW-0812">Transmembrane</keyword>
<keyword id="KW-1133">Transmembrane helix</keyword>
<keyword id="KW-0813">Transport</keyword>
<feature type="chain" id="PRO_0000070458" description="Putative pseudouridine transporter">
    <location>
        <begin position="1"/>
        <end position="416"/>
    </location>
</feature>
<feature type="topological domain" description="Periplasmic" evidence="1">
    <location>
        <begin position="1"/>
        <end position="2"/>
    </location>
</feature>
<feature type="transmembrane region" description="Helical" evidence="1">
    <location>
        <begin position="3"/>
        <end position="23"/>
    </location>
</feature>
<feature type="topological domain" description="Cytoplasmic" evidence="1">
    <location>
        <begin position="24"/>
        <end position="31"/>
    </location>
</feature>
<feature type="transmembrane region" description="Helical" evidence="1">
    <location>
        <begin position="32"/>
        <end position="52"/>
    </location>
</feature>
<feature type="topological domain" description="Periplasmic" evidence="1">
    <location>
        <begin position="53"/>
        <end position="104"/>
    </location>
</feature>
<feature type="transmembrane region" description="Helical" evidence="1">
    <location>
        <begin position="105"/>
        <end position="125"/>
    </location>
</feature>
<feature type="topological domain" description="Cytoplasmic" evidence="1">
    <location>
        <begin position="126"/>
        <end position="172"/>
    </location>
</feature>
<feature type="transmembrane region" description="Helical" evidence="1">
    <location>
        <begin position="173"/>
        <end position="193"/>
    </location>
</feature>
<feature type="topological domain" description="Periplasmic" evidence="1">
    <location>
        <begin position="194"/>
        <end position="196"/>
    </location>
</feature>
<feature type="transmembrane region" description="Helical" evidence="1">
    <location>
        <begin position="197"/>
        <end position="217"/>
    </location>
</feature>
<feature type="topological domain" description="Cytoplasmic" evidence="1">
    <location>
        <begin position="218"/>
        <end position="268"/>
    </location>
</feature>
<feature type="transmembrane region" description="Helical" evidence="1">
    <location>
        <begin position="269"/>
        <end position="289"/>
    </location>
</feature>
<feature type="topological domain" description="Periplasmic" evidence="1">
    <location>
        <begin position="290"/>
        <end position="352"/>
    </location>
</feature>
<feature type="transmembrane region" description="Helical" evidence="1">
    <location>
        <begin position="353"/>
        <end position="373"/>
    </location>
</feature>
<feature type="topological domain" description="Cytoplasmic" evidence="1">
    <location>
        <begin position="374"/>
        <end position="394"/>
    </location>
</feature>
<feature type="transmembrane region" description="Helical" evidence="1">
    <location>
        <begin position="395"/>
        <end position="415"/>
    </location>
</feature>
<feature type="topological domain" description="Periplasmic" evidence="1">
    <location>
        <position position="416"/>
    </location>
</feature>